<evidence type="ECO:0000250" key="1">
    <source>
        <dbReference type="UniProtKB" id="Q61211"/>
    </source>
</evidence>
<evidence type="ECO:0000255" key="2">
    <source>
        <dbReference type="PROSITE-ProRule" id="PRU00161"/>
    </source>
</evidence>
<evidence type="ECO:0000255" key="3">
    <source>
        <dbReference type="PROSITE-ProRule" id="PRU00200"/>
    </source>
</evidence>
<evidence type="ECO:0000255" key="4">
    <source>
        <dbReference type="PROSITE-ProRule" id="PRU01273"/>
    </source>
</evidence>
<evidence type="ECO:0000256" key="5">
    <source>
        <dbReference type="SAM" id="MobiDB-lite"/>
    </source>
</evidence>
<evidence type="ECO:0000269" key="6">
    <source>
    </source>
</evidence>
<evidence type="ECO:0000269" key="7">
    <source>
    </source>
</evidence>
<evidence type="ECO:0000303" key="8">
    <source>
    </source>
</evidence>
<evidence type="ECO:0000305" key="9"/>
<evidence type="ECO:0000305" key="10">
    <source>
    </source>
</evidence>
<evidence type="ECO:0007744" key="11">
    <source>
    </source>
</evidence>
<evidence type="ECO:0007744" key="12">
    <source>
    </source>
</evidence>
<evidence type="ECO:0007744" key="13">
    <source>
    </source>
</evidence>
<evidence type="ECO:0007829" key="14">
    <source>
        <dbReference type="PDB" id="5OA9"/>
    </source>
</evidence>
<evidence type="ECO:0007829" key="15">
    <source>
        <dbReference type="PDB" id="5W2F"/>
    </source>
</evidence>
<organism>
    <name type="scientific">Homo sapiens</name>
    <name type="common">Human</name>
    <dbReference type="NCBI Taxonomy" id="9606"/>
    <lineage>
        <taxon>Eukaryota</taxon>
        <taxon>Metazoa</taxon>
        <taxon>Chordata</taxon>
        <taxon>Craniata</taxon>
        <taxon>Vertebrata</taxon>
        <taxon>Euteleostomi</taxon>
        <taxon>Mammalia</taxon>
        <taxon>Eutheria</taxon>
        <taxon>Euarchontoglires</taxon>
        <taxon>Primates</taxon>
        <taxon>Haplorrhini</taxon>
        <taxon>Catarrhini</taxon>
        <taxon>Hominidae</taxon>
        <taxon>Homo</taxon>
    </lineage>
</organism>
<dbReference type="EMBL" id="AF220417">
    <property type="protein sequence ID" value="AAF34185.2"/>
    <property type="molecule type" value="mRNA"/>
</dbReference>
<dbReference type="EMBL" id="AF262403">
    <property type="protein sequence ID" value="AAF74205.1"/>
    <property type="molecule type" value="mRNA"/>
</dbReference>
<dbReference type="EMBL" id="AK001852">
    <property type="protein sequence ID" value="BAA91942.1"/>
    <property type="molecule type" value="mRNA"/>
</dbReference>
<dbReference type="EMBL" id="AL591846">
    <property type="status" value="NOT_ANNOTATED_CDS"/>
    <property type="molecule type" value="Genomic_DNA"/>
</dbReference>
<dbReference type="EMBL" id="CH471100">
    <property type="protein sequence ID" value="EAW93536.1"/>
    <property type="molecule type" value="Genomic_DNA"/>
</dbReference>
<dbReference type="EMBL" id="CH471100">
    <property type="protein sequence ID" value="EAW93540.1"/>
    <property type="molecule type" value="Genomic_DNA"/>
</dbReference>
<dbReference type="EMBL" id="BC001585">
    <property type="protein sequence ID" value="AAH01585.1"/>
    <property type="molecule type" value="mRNA"/>
</dbReference>
<dbReference type="EMBL" id="BC039134">
    <property type="protein sequence ID" value="AAH39134.2"/>
    <property type="molecule type" value="mRNA"/>
</dbReference>
<dbReference type="EMBL" id="BC058905">
    <property type="protein sequence ID" value="AAH58905.1"/>
    <property type="molecule type" value="mRNA"/>
</dbReference>
<dbReference type="EMBL" id="AL162001">
    <property type="protein sequence ID" value="CAB82330.1"/>
    <property type="molecule type" value="mRNA"/>
</dbReference>
<dbReference type="EMBL" id="AF159586">
    <property type="protein sequence ID" value="AAD41909.1"/>
    <property type="molecule type" value="mRNA"/>
</dbReference>
<dbReference type="CCDS" id="CCDS1465.1">
    <molecule id="P41214-1"/>
</dbReference>
<dbReference type="CCDS" id="CCDS55680.1">
    <molecule id="P41214-2"/>
</dbReference>
<dbReference type="PIR" id="A60697">
    <property type="entry name" value="A60697"/>
</dbReference>
<dbReference type="PIR" id="T47178">
    <property type="entry name" value="T47178"/>
</dbReference>
<dbReference type="RefSeq" id="NP_001188407.1">
    <molecule id="P41214-2"/>
    <property type="nucleotide sequence ID" value="NM_001201478.2"/>
</dbReference>
<dbReference type="RefSeq" id="NP_008824.2">
    <molecule id="P41214-1"/>
    <property type="nucleotide sequence ID" value="NM_006893.3"/>
</dbReference>
<dbReference type="PDB" id="5OA3">
    <property type="method" value="EM"/>
    <property type="resolution" value="4.30 A"/>
    <property type="chains" value="0=1-584"/>
</dbReference>
<dbReference type="PDB" id="5OA9">
    <property type="method" value="X-ray"/>
    <property type="resolution" value="1.80 A"/>
    <property type="chains" value="A=380-584"/>
</dbReference>
<dbReference type="PDB" id="5W2F">
    <property type="method" value="X-ray"/>
    <property type="resolution" value="1.40 A"/>
    <property type="chains" value="A=380-584"/>
</dbReference>
<dbReference type="PDBsum" id="5OA3"/>
<dbReference type="PDBsum" id="5OA9"/>
<dbReference type="PDBsum" id="5W2F"/>
<dbReference type="EMDB" id="EMD-3770"/>
<dbReference type="SMR" id="P41214"/>
<dbReference type="BioGRID" id="108259">
    <property type="interactions" value="56"/>
</dbReference>
<dbReference type="FunCoup" id="P41214">
    <property type="interactions" value="3098"/>
</dbReference>
<dbReference type="IntAct" id="P41214">
    <property type="interactions" value="23"/>
</dbReference>
<dbReference type="MINT" id="P41214"/>
<dbReference type="STRING" id="9606.ENSP00000271764"/>
<dbReference type="iPTMnet" id="P41214"/>
<dbReference type="MetOSite" id="P41214"/>
<dbReference type="PhosphoSitePlus" id="P41214"/>
<dbReference type="BioMuta" id="EIF2D"/>
<dbReference type="DMDM" id="158957575"/>
<dbReference type="jPOST" id="P41214"/>
<dbReference type="MassIVE" id="P41214"/>
<dbReference type="PaxDb" id="9606-ENSP00000271764"/>
<dbReference type="PeptideAtlas" id="P41214"/>
<dbReference type="ProteomicsDB" id="55417">
    <molecule id="P41214-1"/>
</dbReference>
<dbReference type="ProteomicsDB" id="55418">
    <molecule id="P41214-2"/>
</dbReference>
<dbReference type="Pumba" id="P41214"/>
<dbReference type="Antibodypedia" id="34586">
    <property type="antibodies" value="117 antibodies from 25 providers"/>
</dbReference>
<dbReference type="DNASU" id="1939"/>
<dbReference type="Ensembl" id="ENST00000271764.7">
    <molecule id="P41214-1"/>
    <property type="protein sequence ID" value="ENSP00000271764.2"/>
    <property type="gene ID" value="ENSG00000143486.16"/>
</dbReference>
<dbReference type="Ensembl" id="ENST00000367114.7">
    <molecule id="P41214-2"/>
    <property type="protein sequence ID" value="ENSP00000356081.3"/>
    <property type="gene ID" value="ENSG00000143486.16"/>
</dbReference>
<dbReference type="GeneID" id="1939"/>
<dbReference type="KEGG" id="hsa:1939"/>
<dbReference type="MANE-Select" id="ENST00000271764.7">
    <property type="protein sequence ID" value="ENSP00000271764.2"/>
    <property type="RefSeq nucleotide sequence ID" value="NM_006893.3"/>
    <property type="RefSeq protein sequence ID" value="NP_008824.2"/>
</dbReference>
<dbReference type="UCSC" id="uc001heh.4">
    <molecule id="P41214-1"/>
    <property type="organism name" value="human"/>
</dbReference>
<dbReference type="AGR" id="HGNC:6583"/>
<dbReference type="CTD" id="1939"/>
<dbReference type="DisGeNET" id="1939"/>
<dbReference type="GeneCards" id="EIF2D"/>
<dbReference type="HGNC" id="HGNC:6583">
    <property type="gene designation" value="EIF2D"/>
</dbReference>
<dbReference type="HPA" id="ENSG00000143486">
    <property type="expression patterns" value="Low tissue specificity"/>
</dbReference>
<dbReference type="MIM" id="613709">
    <property type="type" value="gene"/>
</dbReference>
<dbReference type="neXtProt" id="NX_P41214"/>
<dbReference type="OpenTargets" id="ENSG00000143486"/>
<dbReference type="PharmGKB" id="PA30355"/>
<dbReference type="VEuPathDB" id="HostDB:ENSG00000143486"/>
<dbReference type="eggNOG" id="KOG2522">
    <property type="taxonomic scope" value="Eukaryota"/>
</dbReference>
<dbReference type="GeneTree" id="ENSGT00550000074865"/>
<dbReference type="HOGENOM" id="CLU_012487_2_0_1"/>
<dbReference type="InParanoid" id="P41214"/>
<dbReference type="OMA" id="MFLKPYR"/>
<dbReference type="OrthoDB" id="199771at2759"/>
<dbReference type="PAN-GO" id="P41214">
    <property type="GO annotations" value="2 GO annotations based on evolutionary models"/>
</dbReference>
<dbReference type="PhylomeDB" id="P41214"/>
<dbReference type="TreeFam" id="TF105830"/>
<dbReference type="PathwayCommons" id="P41214"/>
<dbReference type="SignaLink" id="P41214"/>
<dbReference type="BioGRID-ORCS" id="1939">
    <property type="hits" value="19 hits in 1158 CRISPR screens"/>
</dbReference>
<dbReference type="CD-CODE" id="DEE660B4">
    <property type="entry name" value="Stress granule"/>
</dbReference>
<dbReference type="ChiTaRS" id="EIF2D">
    <property type="organism name" value="human"/>
</dbReference>
<dbReference type="GeneWiki" id="LGTN"/>
<dbReference type="GenomeRNAi" id="1939"/>
<dbReference type="Pharos" id="P41214">
    <property type="development level" value="Tbio"/>
</dbReference>
<dbReference type="PRO" id="PR:P41214"/>
<dbReference type="Proteomes" id="UP000005640">
    <property type="component" value="Chromosome 1"/>
</dbReference>
<dbReference type="RNAct" id="P41214">
    <property type="molecule type" value="protein"/>
</dbReference>
<dbReference type="Bgee" id="ENSG00000143486">
    <property type="expression patterns" value="Expressed in left ovary and 196 other cell types or tissues"/>
</dbReference>
<dbReference type="ExpressionAtlas" id="P41214">
    <property type="expression patterns" value="baseline and differential"/>
</dbReference>
<dbReference type="GO" id="GO:0005737">
    <property type="term" value="C:cytoplasm"/>
    <property type="evidence" value="ECO:0000314"/>
    <property type="project" value="UniProtKB"/>
</dbReference>
<dbReference type="GO" id="GO:0005829">
    <property type="term" value="C:cytosol"/>
    <property type="evidence" value="ECO:0000314"/>
    <property type="project" value="HPA"/>
</dbReference>
<dbReference type="GO" id="GO:0016604">
    <property type="term" value="C:nuclear body"/>
    <property type="evidence" value="ECO:0000314"/>
    <property type="project" value="HPA"/>
</dbReference>
<dbReference type="GO" id="GO:0003723">
    <property type="term" value="F:RNA binding"/>
    <property type="evidence" value="ECO:0007669"/>
    <property type="project" value="InterPro"/>
</dbReference>
<dbReference type="GO" id="GO:0038023">
    <property type="term" value="F:signaling receptor activity"/>
    <property type="evidence" value="ECO:0000304"/>
    <property type="project" value="ProtInc"/>
</dbReference>
<dbReference type="GO" id="GO:0003743">
    <property type="term" value="F:translation initiation factor activity"/>
    <property type="evidence" value="ECO:0000314"/>
    <property type="project" value="UniProtKB"/>
</dbReference>
<dbReference type="GO" id="GO:0001731">
    <property type="term" value="P:formation of translation preinitiation complex"/>
    <property type="evidence" value="ECO:0000314"/>
    <property type="project" value="UniProtKB"/>
</dbReference>
<dbReference type="GO" id="GO:0006886">
    <property type="term" value="P:intracellular protein transport"/>
    <property type="evidence" value="ECO:0000304"/>
    <property type="project" value="ProtInc"/>
</dbReference>
<dbReference type="GO" id="GO:0075522">
    <property type="term" value="P:IRES-dependent viral translational initiation"/>
    <property type="evidence" value="ECO:0000314"/>
    <property type="project" value="UniProtKB"/>
</dbReference>
<dbReference type="GO" id="GO:0032790">
    <property type="term" value="P:ribosome disassembly"/>
    <property type="evidence" value="ECO:0000314"/>
    <property type="project" value="UniProtKB"/>
</dbReference>
<dbReference type="CDD" id="cd11608">
    <property type="entry name" value="eIF2D_C"/>
    <property type="match status" value="1"/>
</dbReference>
<dbReference type="CDD" id="cd11610">
    <property type="entry name" value="eIF2D_N"/>
    <property type="match status" value="1"/>
</dbReference>
<dbReference type="CDD" id="cd21156">
    <property type="entry name" value="PUA_eIF2d-like"/>
    <property type="match status" value="1"/>
</dbReference>
<dbReference type="DisProt" id="DP02704"/>
<dbReference type="FunFam" id="3.10.400.20:FF:000002">
    <property type="entry name" value="Eukaryotic translation initiation factor 2D"/>
    <property type="match status" value="1"/>
</dbReference>
<dbReference type="FunFam" id="3.30.780.10:FF:000007">
    <property type="entry name" value="Putative eukaryotic translation initiation factor 2d"/>
    <property type="match status" value="1"/>
</dbReference>
<dbReference type="Gene3D" id="3.10.400.20">
    <property type="match status" value="1"/>
</dbReference>
<dbReference type="Gene3D" id="3.30.780.10">
    <property type="entry name" value="SUI1-like domain"/>
    <property type="match status" value="1"/>
</dbReference>
<dbReference type="InterPro" id="IPR039757">
    <property type="entry name" value="EIF2D"/>
</dbReference>
<dbReference type="InterPro" id="IPR048247">
    <property type="entry name" value="eIF2D_N"/>
</dbReference>
<dbReference type="InterPro" id="IPR039759">
    <property type="entry name" value="eIF2D_SUI1"/>
</dbReference>
<dbReference type="InterPro" id="IPR041366">
    <property type="entry name" value="Pre-PUA"/>
</dbReference>
<dbReference type="InterPro" id="IPR002478">
    <property type="entry name" value="PUA"/>
</dbReference>
<dbReference type="InterPro" id="IPR015947">
    <property type="entry name" value="PUA-like_sf"/>
</dbReference>
<dbReference type="InterPro" id="IPR048248">
    <property type="entry name" value="PUA_eIF2d-like"/>
</dbReference>
<dbReference type="InterPro" id="IPR001950">
    <property type="entry name" value="SUI1"/>
</dbReference>
<dbReference type="InterPro" id="IPR036877">
    <property type="entry name" value="SUI1_dom_sf"/>
</dbReference>
<dbReference type="InterPro" id="IPR036885">
    <property type="entry name" value="SWIB_MDM2_dom_sf"/>
</dbReference>
<dbReference type="InterPro" id="IPR003121">
    <property type="entry name" value="SWIB_MDM2_domain"/>
</dbReference>
<dbReference type="PANTHER" id="PTHR12217">
    <property type="entry name" value="EUKARYOTIC TRANSLATION INITIATION FACTOR 2D"/>
    <property type="match status" value="1"/>
</dbReference>
<dbReference type="PANTHER" id="PTHR12217:SF4">
    <property type="entry name" value="EUKARYOTIC TRANSLATION INITIATION FACTOR 2D"/>
    <property type="match status" value="1"/>
</dbReference>
<dbReference type="Pfam" id="PF17832">
    <property type="entry name" value="Pre-PUA"/>
    <property type="match status" value="1"/>
</dbReference>
<dbReference type="Pfam" id="PF01253">
    <property type="entry name" value="SUI1"/>
    <property type="match status" value="1"/>
</dbReference>
<dbReference type="Pfam" id="PF25304">
    <property type="entry name" value="WH_eIF2D"/>
    <property type="match status" value="1"/>
</dbReference>
<dbReference type="SMART" id="SM00359">
    <property type="entry name" value="PUA"/>
    <property type="match status" value="1"/>
</dbReference>
<dbReference type="SUPFAM" id="SSF55159">
    <property type="entry name" value="eIF1-like"/>
    <property type="match status" value="1"/>
</dbReference>
<dbReference type="SUPFAM" id="SSF88697">
    <property type="entry name" value="PUA domain-like"/>
    <property type="match status" value="1"/>
</dbReference>
<dbReference type="SUPFAM" id="SSF47592">
    <property type="entry name" value="SWIB/MDM2 domain"/>
    <property type="match status" value="1"/>
</dbReference>
<dbReference type="PROSITE" id="PS50890">
    <property type="entry name" value="PUA"/>
    <property type="match status" value="1"/>
</dbReference>
<dbReference type="PROSITE" id="PS50296">
    <property type="entry name" value="SUI1"/>
    <property type="match status" value="1"/>
</dbReference>
<dbReference type="PROSITE" id="PS51925">
    <property type="entry name" value="SWIB_MDM2"/>
    <property type="match status" value="1"/>
</dbReference>
<protein>
    <recommendedName>
        <fullName>Eukaryotic translation initiation factor 2D</fullName>
        <shortName>eIF2d</shortName>
    </recommendedName>
    <alternativeName>
        <fullName>Hepatocellular carcinoma-associated antigen 56</fullName>
    </alternativeName>
    <alternativeName>
        <fullName>Ligatin</fullName>
    </alternativeName>
</protein>
<keyword id="KW-0002">3D-structure</keyword>
<keyword id="KW-0007">Acetylation</keyword>
<keyword id="KW-0025">Alternative splicing</keyword>
<keyword id="KW-0963">Cytoplasm</keyword>
<keyword id="KW-0396">Initiation factor</keyword>
<keyword id="KW-0597">Phosphoprotein</keyword>
<keyword id="KW-0648">Protein biosynthesis</keyword>
<keyword id="KW-1267">Proteomics identification</keyword>
<keyword id="KW-1185">Reference proteome</keyword>
<sequence length="584" mass="64706">MFAKAFRVKSNTAIKGSDRRKLRADVTTAFPTLGTDQVSELVPGKEELNIVKLYAHKGDAVTVYVSGGNPILFELEKNLYPTVYTLWSYPDLLPTFTTWPLVLEKLVGGADLMLPGLVMPPAGLPQVQKGDLCAISLVGNRAPVAIGVAAMSTAEMLTSGLKGRGFSVLHTYQDHLWRSGNKSSPPSIAPLALDSADLSEEKGSVQMDSTLQGDMRHMTLEGEEENGEVHQAREDKSLSEAPEDTSTRGLNQDSTDSKTLQEQMDELLQQCFLHALKCRVKKADLPLLTSTFLGSHMFSCCPEGRQLDIKKSSYKKLSKFLQQMQQEQIIQVKELSKGVESIVAVDWKHPRITSFVIPEPSPTSQTIQEGSREQPYHPPDIKPLYCVPASMTLLFQESGHKKGSFLEGSEVRTIVINYAKKNDLVDADNKNLVRLDPILCDCILEKNEQHTVMKLPWDSLLTRCLEKLQPAYQVTLPGQEPIVKKGRICPIDITLAQRASNKKVTVVRNLEAYGLDPYSVAAILQQRCQASTTVNPAPGAKDSLQVQIQGNQVHHLGWLLLEEYQLPRKHIQGLEKALKPGKKK</sequence>
<accession>P41214</accession>
<accession>Q5SY40</accession>
<accession>Q8IXV3</accession>
<accession>Q96DG3</accession>
<accession>Q96TG7</accession>
<accession>Q9NR27</accession>
<accession>Q9NSN0</accession>
<accession>Q9NV18</accession>
<accession>Q9NZ21</accession>
<gene>
    <name type="primary">EIF2D</name>
    <name type="synonym">HCA56</name>
    <name type="synonym">LGTN</name>
</gene>
<feature type="chain" id="PRO_0000130611" description="Eukaryotic translation initiation factor 2D">
    <location>
        <begin position="1"/>
        <end position="584"/>
    </location>
</feature>
<feature type="domain" description="PUA" evidence="2">
    <location>
        <begin position="93"/>
        <end position="173"/>
    </location>
</feature>
<feature type="domain" description="SWIB/MDM2" evidence="4">
    <location>
        <begin position="383"/>
        <end position="467"/>
    </location>
</feature>
<feature type="domain" description="SUI1" evidence="3">
    <location>
        <begin position="491"/>
        <end position="564"/>
    </location>
</feature>
<feature type="region of interest" description="Disordered" evidence="5">
    <location>
        <begin position="223"/>
        <end position="257"/>
    </location>
</feature>
<feature type="compositionally biased region" description="Basic and acidic residues" evidence="5">
    <location>
        <begin position="227"/>
        <end position="238"/>
    </location>
</feature>
<feature type="compositionally biased region" description="Polar residues" evidence="5">
    <location>
        <begin position="247"/>
        <end position="257"/>
    </location>
</feature>
<feature type="modified residue" description="N-acetylmethionine" evidence="12">
    <location>
        <position position="1"/>
    </location>
</feature>
<feature type="modified residue" description="Phosphoserine" evidence="11 13">
    <location>
        <position position="237"/>
    </location>
</feature>
<feature type="modified residue" description="Phosphoserine" evidence="1">
    <location>
        <position position="254"/>
    </location>
</feature>
<feature type="modified residue" description="Phosphoserine" evidence="13">
    <location>
        <position position="361"/>
    </location>
</feature>
<feature type="splice variant" id="VSP_006300" description="In isoform 2." evidence="8">
    <location>
        <begin position="177"/>
        <end position="300"/>
    </location>
</feature>
<feature type="sequence variant" id="VAR_052507" description="In dbSNP:rs35252702.">
    <original>T</original>
    <variation>I</variation>
    <location>
        <position position="210"/>
    </location>
</feature>
<feature type="sequence conflict" description="In Ref. 3; BAA91942." evidence="9" ref="3">
    <original>N</original>
    <variation>D</variation>
    <location>
        <position position="11"/>
    </location>
</feature>
<feature type="sequence conflict" description="In Ref. 2; AAF34185/AAF74205." evidence="9" ref="2">
    <original>S</original>
    <variation>N</variation>
    <location>
        <position position="66"/>
    </location>
</feature>
<feature type="sequence conflict" description="In Ref. 2; AAF34185." evidence="9" ref="2">
    <original>T</original>
    <variation>N</variation>
    <location>
        <position position="210"/>
    </location>
</feature>
<feature type="sequence conflict" description="In Ref. 8; AAD41909." evidence="9" ref="8">
    <original>GRQLD</original>
    <variation>DDNWT</variation>
    <location>
        <begin position="304"/>
        <end position="308"/>
    </location>
</feature>
<feature type="strand" evidence="15">
    <location>
        <begin position="382"/>
        <end position="386"/>
    </location>
</feature>
<feature type="helix" evidence="15">
    <location>
        <begin position="389"/>
        <end position="391"/>
    </location>
</feature>
<feature type="helix" evidence="15">
    <location>
        <begin position="392"/>
        <end position="395"/>
    </location>
</feature>
<feature type="turn" evidence="15">
    <location>
        <begin position="396"/>
        <end position="399"/>
    </location>
</feature>
<feature type="helix" evidence="15">
    <location>
        <begin position="408"/>
        <end position="421"/>
    </location>
</feature>
<feature type="strand" evidence="15">
    <location>
        <begin position="432"/>
        <end position="434"/>
    </location>
</feature>
<feature type="helix" evidence="15">
    <location>
        <begin position="437"/>
        <end position="443"/>
    </location>
</feature>
<feature type="helix" evidence="14">
    <location>
        <begin position="446"/>
        <end position="448"/>
    </location>
</feature>
<feature type="turn" evidence="14">
    <location>
        <begin position="449"/>
        <end position="451"/>
    </location>
</feature>
<feature type="strand" evidence="15">
    <location>
        <begin position="454"/>
        <end position="456"/>
    </location>
</feature>
<feature type="helix" evidence="15">
    <location>
        <begin position="457"/>
        <end position="467"/>
    </location>
</feature>
<feature type="strand" evidence="15">
    <location>
        <begin position="468"/>
        <end position="474"/>
    </location>
</feature>
<feature type="strand" evidence="15">
    <location>
        <begin position="482"/>
        <end position="486"/>
    </location>
</feature>
<feature type="strand" evidence="15">
    <location>
        <begin position="491"/>
        <end position="499"/>
    </location>
</feature>
<feature type="strand" evidence="15">
    <location>
        <begin position="502"/>
        <end position="508"/>
    </location>
</feature>
<feature type="helix" evidence="15">
    <location>
        <begin position="510"/>
        <end position="513"/>
    </location>
</feature>
<feature type="helix" evidence="15">
    <location>
        <begin position="517"/>
        <end position="528"/>
    </location>
</feature>
<feature type="strand" evidence="15">
    <location>
        <begin position="532"/>
        <end position="536"/>
    </location>
</feature>
<feature type="strand" evidence="15">
    <location>
        <begin position="538"/>
        <end position="541"/>
    </location>
</feature>
<feature type="strand" evidence="15">
    <location>
        <begin position="544"/>
        <end position="550"/>
    </location>
</feature>
<feature type="helix" evidence="15">
    <location>
        <begin position="553"/>
        <end position="561"/>
    </location>
</feature>
<feature type="helix" evidence="15">
    <location>
        <begin position="568"/>
        <end position="570"/>
    </location>
</feature>
<feature type="strand" evidence="15">
    <location>
        <begin position="571"/>
        <end position="573"/>
    </location>
</feature>
<feature type="helix" evidence="15">
    <location>
        <begin position="574"/>
        <end position="576"/>
    </location>
</feature>
<name>EIF2D_HUMAN</name>
<proteinExistence type="evidence at protein level"/>
<comment type="function">
    <text evidence="6 7">Translation initiation factor that is able to deliver tRNA to the P-site of the eukaryotic ribosome in a GTP-independent manner. The binding of Met-tRNA(I) occurs after the AUG codon finds its position in the P-site of 40S ribosomes, the situation that takes place during initiation complex formation on some specific RNAs. Its activity in tRNA binding with 40S subunits does not require the presence of the aminoacyl moiety. Possesses the unique ability to deliver non-Met (elongator) tRNAs into the P-site of the 40S subunit. In addition to its role in initiation, can promote release of deacylated tRNA and mRNA from recycled 40S subunits following ABCE1-mediated dissociation of post-termination ribosomal complexes into subunits.</text>
</comment>
<comment type="subcellular location">
    <subcellularLocation>
        <location evidence="6">Cytoplasm</location>
    </subcellularLocation>
</comment>
<comment type="alternative products">
    <event type="alternative splicing"/>
    <isoform>
        <id>P41214-1</id>
        <name>1</name>
        <sequence type="displayed"/>
    </isoform>
    <isoform>
        <id>P41214-2</id>
        <name>2</name>
        <sequence type="described" ref="VSP_006300"/>
    </isoform>
</comment>
<comment type="developmental stage">
    <text>Found during embryonic development and in early differentiated states.</text>
</comment>
<comment type="similarity">
    <text evidence="9">Belongs to the eIF2D family.</text>
</comment>
<comment type="caution">
    <text evidence="10">Was previously erroneously called ligatin, a trafficking receptor for phosphoglycoproteins, while ligatin is actually a distinct 10 kDa filamentous membrane protein encoded by a still unidentified gene.</text>
</comment>
<reference key="1">
    <citation type="journal article" date="2010" name="J. Biol. Chem.">
        <title>GTP-independent tRNA delivery to the ribosomal P-site by a novel eukaryotic translation factor.</title>
        <authorList>
            <person name="Dmitriev S.E."/>
            <person name="Terenin I.M."/>
            <person name="Andreev D.E."/>
            <person name="Ivanov P.A."/>
            <person name="Dunaevsky J.E."/>
            <person name="Merrick W.C."/>
            <person name="Shatsky I.N."/>
        </authorList>
    </citation>
    <scope>NUCLEOTIDE SEQUENCE [MRNA] (ISOFORM 1)</scope>
    <scope>IDENTIFICATION BY MASS SPECTROMETRY</scope>
    <scope>FUNCTION</scope>
    <scope>SUBCELLULAR LOCATION</scope>
</reference>
<reference key="2">
    <citation type="journal article" date="2002" name="J. Immunol.">
        <title>Large scale identification of human hepatocellular carcinoma-associated antigens by autoantibodies.</title>
        <authorList>
            <person name="Wang Y."/>
            <person name="Han K.-J."/>
            <person name="Pang X.-W."/>
            <person name="Vaughan H.A."/>
            <person name="Qu W."/>
            <person name="Dong X.-Y."/>
            <person name="Peng J.-R."/>
            <person name="Zhao H.-T."/>
            <person name="Rui J.-A."/>
            <person name="Leng X.-S."/>
            <person name="Cebon J."/>
            <person name="Burgess A.W."/>
            <person name="Chen W.-F."/>
        </authorList>
    </citation>
    <scope>NUCLEOTIDE SEQUENCE [MRNA] (ISOFORMS 1 AND 2)</scope>
    <source>
        <tissue>Hepatoma</tissue>
    </source>
</reference>
<reference key="3">
    <citation type="journal article" date="2004" name="Nat. Genet.">
        <title>Complete sequencing and characterization of 21,243 full-length human cDNAs.</title>
        <authorList>
            <person name="Ota T."/>
            <person name="Suzuki Y."/>
            <person name="Nishikawa T."/>
            <person name="Otsuki T."/>
            <person name="Sugiyama T."/>
            <person name="Irie R."/>
            <person name="Wakamatsu A."/>
            <person name="Hayashi K."/>
            <person name="Sato H."/>
            <person name="Nagai K."/>
            <person name="Kimura K."/>
            <person name="Makita H."/>
            <person name="Sekine M."/>
            <person name="Obayashi M."/>
            <person name="Nishi T."/>
            <person name="Shibahara T."/>
            <person name="Tanaka T."/>
            <person name="Ishii S."/>
            <person name="Yamamoto J."/>
            <person name="Saito K."/>
            <person name="Kawai Y."/>
            <person name="Isono Y."/>
            <person name="Nakamura Y."/>
            <person name="Nagahari K."/>
            <person name="Murakami K."/>
            <person name="Yasuda T."/>
            <person name="Iwayanagi T."/>
            <person name="Wagatsuma M."/>
            <person name="Shiratori A."/>
            <person name="Sudo H."/>
            <person name="Hosoiri T."/>
            <person name="Kaku Y."/>
            <person name="Kodaira H."/>
            <person name="Kondo H."/>
            <person name="Sugawara M."/>
            <person name="Takahashi M."/>
            <person name="Kanda K."/>
            <person name="Yokoi T."/>
            <person name="Furuya T."/>
            <person name="Kikkawa E."/>
            <person name="Omura Y."/>
            <person name="Abe K."/>
            <person name="Kamihara K."/>
            <person name="Katsuta N."/>
            <person name="Sato K."/>
            <person name="Tanikawa M."/>
            <person name="Yamazaki M."/>
            <person name="Ninomiya K."/>
            <person name="Ishibashi T."/>
            <person name="Yamashita H."/>
            <person name="Murakawa K."/>
            <person name="Fujimori K."/>
            <person name="Tanai H."/>
            <person name="Kimata M."/>
            <person name="Watanabe M."/>
            <person name="Hiraoka S."/>
            <person name="Chiba Y."/>
            <person name="Ishida S."/>
            <person name="Ono Y."/>
            <person name="Takiguchi S."/>
            <person name="Watanabe S."/>
            <person name="Yosida M."/>
            <person name="Hotuta T."/>
            <person name="Kusano J."/>
            <person name="Kanehori K."/>
            <person name="Takahashi-Fujii A."/>
            <person name="Hara H."/>
            <person name="Tanase T.-O."/>
            <person name="Nomura Y."/>
            <person name="Togiya S."/>
            <person name="Komai F."/>
            <person name="Hara R."/>
            <person name="Takeuchi K."/>
            <person name="Arita M."/>
            <person name="Imose N."/>
            <person name="Musashino K."/>
            <person name="Yuuki H."/>
            <person name="Oshima A."/>
            <person name="Sasaki N."/>
            <person name="Aotsuka S."/>
            <person name="Yoshikawa Y."/>
            <person name="Matsunawa H."/>
            <person name="Ichihara T."/>
            <person name="Shiohata N."/>
            <person name="Sano S."/>
            <person name="Moriya S."/>
            <person name="Momiyama H."/>
            <person name="Satoh N."/>
            <person name="Takami S."/>
            <person name="Terashima Y."/>
            <person name="Suzuki O."/>
            <person name="Nakagawa S."/>
            <person name="Senoh A."/>
            <person name="Mizoguchi H."/>
            <person name="Goto Y."/>
            <person name="Shimizu F."/>
            <person name="Wakebe H."/>
            <person name="Hishigaki H."/>
            <person name="Watanabe T."/>
            <person name="Sugiyama A."/>
            <person name="Takemoto M."/>
            <person name="Kawakami B."/>
            <person name="Yamazaki M."/>
            <person name="Watanabe K."/>
            <person name="Kumagai A."/>
            <person name="Itakura S."/>
            <person name="Fukuzumi Y."/>
            <person name="Fujimori Y."/>
            <person name="Komiyama M."/>
            <person name="Tashiro H."/>
            <person name="Tanigami A."/>
            <person name="Fujiwara T."/>
            <person name="Ono T."/>
            <person name="Yamada K."/>
            <person name="Fujii Y."/>
            <person name="Ozaki K."/>
            <person name="Hirao M."/>
            <person name="Ohmori Y."/>
            <person name="Kawabata A."/>
            <person name="Hikiji T."/>
            <person name="Kobatake N."/>
            <person name="Inagaki H."/>
            <person name="Ikema Y."/>
            <person name="Okamoto S."/>
            <person name="Okitani R."/>
            <person name="Kawakami T."/>
            <person name="Noguchi S."/>
            <person name="Itoh T."/>
            <person name="Shigeta K."/>
            <person name="Senba T."/>
            <person name="Matsumura K."/>
            <person name="Nakajima Y."/>
            <person name="Mizuno T."/>
            <person name="Morinaga M."/>
            <person name="Sasaki M."/>
            <person name="Togashi T."/>
            <person name="Oyama M."/>
            <person name="Hata H."/>
            <person name="Watanabe M."/>
            <person name="Komatsu T."/>
            <person name="Mizushima-Sugano J."/>
            <person name="Satoh T."/>
            <person name="Shirai Y."/>
            <person name="Takahashi Y."/>
            <person name="Nakagawa K."/>
            <person name="Okumura K."/>
            <person name="Nagase T."/>
            <person name="Nomura N."/>
            <person name="Kikuchi H."/>
            <person name="Masuho Y."/>
            <person name="Yamashita R."/>
            <person name="Nakai K."/>
            <person name="Yada T."/>
            <person name="Nakamura Y."/>
            <person name="Ohara O."/>
            <person name="Isogai T."/>
            <person name="Sugano S."/>
        </authorList>
    </citation>
    <scope>NUCLEOTIDE SEQUENCE [LARGE SCALE MRNA] (ISOFORM 1)</scope>
    <source>
        <tissue>Placenta</tissue>
    </source>
</reference>
<reference key="4">
    <citation type="journal article" date="2006" name="Nature">
        <title>The DNA sequence and biological annotation of human chromosome 1.</title>
        <authorList>
            <person name="Gregory S.G."/>
            <person name="Barlow K.F."/>
            <person name="McLay K.E."/>
            <person name="Kaul R."/>
            <person name="Swarbreck D."/>
            <person name="Dunham A."/>
            <person name="Scott C.E."/>
            <person name="Howe K.L."/>
            <person name="Woodfine K."/>
            <person name="Spencer C.C.A."/>
            <person name="Jones M.C."/>
            <person name="Gillson C."/>
            <person name="Searle S."/>
            <person name="Zhou Y."/>
            <person name="Kokocinski F."/>
            <person name="McDonald L."/>
            <person name="Evans R."/>
            <person name="Phillips K."/>
            <person name="Atkinson A."/>
            <person name="Cooper R."/>
            <person name="Jones C."/>
            <person name="Hall R.E."/>
            <person name="Andrews T.D."/>
            <person name="Lloyd C."/>
            <person name="Ainscough R."/>
            <person name="Almeida J.P."/>
            <person name="Ambrose K.D."/>
            <person name="Anderson F."/>
            <person name="Andrew R.W."/>
            <person name="Ashwell R.I.S."/>
            <person name="Aubin K."/>
            <person name="Babbage A.K."/>
            <person name="Bagguley C.L."/>
            <person name="Bailey J."/>
            <person name="Beasley H."/>
            <person name="Bethel G."/>
            <person name="Bird C.P."/>
            <person name="Bray-Allen S."/>
            <person name="Brown J.Y."/>
            <person name="Brown A.J."/>
            <person name="Buckley D."/>
            <person name="Burton J."/>
            <person name="Bye J."/>
            <person name="Carder C."/>
            <person name="Chapman J.C."/>
            <person name="Clark S.Y."/>
            <person name="Clarke G."/>
            <person name="Clee C."/>
            <person name="Cobley V."/>
            <person name="Collier R.E."/>
            <person name="Corby N."/>
            <person name="Coville G.J."/>
            <person name="Davies J."/>
            <person name="Deadman R."/>
            <person name="Dunn M."/>
            <person name="Earthrowl M."/>
            <person name="Ellington A.G."/>
            <person name="Errington H."/>
            <person name="Frankish A."/>
            <person name="Frankland J."/>
            <person name="French L."/>
            <person name="Garner P."/>
            <person name="Garnett J."/>
            <person name="Gay L."/>
            <person name="Ghori M.R.J."/>
            <person name="Gibson R."/>
            <person name="Gilby L.M."/>
            <person name="Gillett W."/>
            <person name="Glithero R.J."/>
            <person name="Grafham D.V."/>
            <person name="Griffiths C."/>
            <person name="Griffiths-Jones S."/>
            <person name="Grocock R."/>
            <person name="Hammond S."/>
            <person name="Harrison E.S.I."/>
            <person name="Hart E."/>
            <person name="Haugen E."/>
            <person name="Heath P.D."/>
            <person name="Holmes S."/>
            <person name="Holt K."/>
            <person name="Howden P.J."/>
            <person name="Hunt A.R."/>
            <person name="Hunt S.E."/>
            <person name="Hunter G."/>
            <person name="Isherwood J."/>
            <person name="James R."/>
            <person name="Johnson C."/>
            <person name="Johnson D."/>
            <person name="Joy A."/>
            <person name="Kay M."/>
            <person name="Kershaw J.K."/>
            <person name="Kibukawa M."/>
            <person name="Kimberley A.M."/>
            <person name="King A."/>
            <person name="Knights A.J."/>
            <person name="Lad H."/>
            <person name="Laird G."/>
            <person name="Lawlor S."/>
            <person name="Leongamornlert D.A."/>
            <person name="Lloyd D.M."/>
            <person name="Loveland J."/>
            <person name="Lovell J."/>
            <person name="Lush M.J."/>
            <person name="Lyne R."/>
            <person name="Martin S."/>
            <person name="Mashreghi-Mohammadi M."/>
            <person name="Matthews L."/>
            <person name="Matthews N.S.W."/>
            <person name="McLaren S."/>
            <person name="Milne S."/>
            <person name="Mistry S."/>
            <person name="Moore M.J.F."/>
            <person name="Nickerson T."/>
            <person name="O'Dell C.N."/>
            <person name="Oliver K."/>
            <person name="Palmeiri A."/>
            <person name="Palmer S.A."/>
            <person name="Parker A."/>
            <person name="Patel D."/>
            <person name="Pearce A.V."/>
            <person name="Peck A.I."/>
            <person name="Pelan S."/>
            <person name="Phelps K."/>
            <person name="Phillimore B.J."/>
            <person name="Plumb R."/>
            <person name="Rajan J."/>
            <person name="Raymond C."/>
            <person name="Rouse G."/>
            <person name="Saenphimmachak C."/>
            <person name="Sehra H.K."/>
            <person name="Sheridan E."/>
            <person name="Shownkeen R."/>
            <person name="Sims S."/>
            <person name="Skuce C.D."/>
            <person name="Smith M."/>
            <person name="Steward C."/>
            <person name="Subramanian S."/>
            <person name="Sycamore N."/>
            <person name="Tracey A."/>
            <person name="Tromans A."/>
            <person name="Van Helmond Z."/>
            <person name="Wall M."/>
            <person name="Wallis J.M."/>
            <person name="White S."/>
            <person name="Whitehead S.L."/>
            <person name="Wilkinson J.E."/>
            <person name="Willey D.L."/>
            <person name="Williams H."/>
            <person name="Wilming L."/>
            <person name="Wray P.W."/>
            <person name="Wu Z."/>
            <person name="Coulson A."/>
            <person name="Vaudin M."/>
            <person name="Sulston J.E."/>
            <person name="Durbin R.M."/>
            <person name="Hubbard T."/>
            <person name="Wooster R."/>
            <person name="Dunham I."/>
            <person name="Carter N.P."/>
            <person name="McVean G."/>
            <person name="Ross M.T."/>
            <person name="Harrow J."/>
            <person name="Olson M.V."/>
            <person name="Beck S."/>
            <person name="Rogers J."/>
            <person name="Bentley D.R."/>
        </authorList>
    </citation>
    <scope>NUCLEOTIDE SEQUENCE [LARGE SCALE GENOMIC DNA]</scope>
</reference>
<reference key="5">
    <citation type="submission" date="2005-09" db="EMBL/GenBank/DDBJ databases">
        <authorList>
            <person name="Mural R.J."/>
            <person name="Istrail S."/>
            <person name="Sutton G.G."/>
            <person name="Florea L."/>
            <person name="Halpern A.L."/>
            <person name="Mobarry C.M."/>
            <person name="Lippert R."/>
            <person name="Walenz B."/>
            <person name="Shatkay H."/>
            <person name="Dew I."/>
            <person name="Miller J.R."/>
            <person name="Flanigan M.J."/>
            <person name="Edwards N.J."/>
            <person name="Bolanos R."/>
            <person name="Fasulo D."/>
            <person name="Halldorsson B.V."/>
            <person name="Hannenhalli S."/>
            <person name="Turner R."/>
            <person name="Yooseph S."/>
            <person name="Lu F."/>
            <person name="Nusskern D.R."/>
            <person name="Shue B.C."/>
            <person name="Zheng X.H."/>
            <person name="Zhong F."/>
            <person name="Delcher A.L."/>
            <person name="Huson D.H."/>
            <person name="Kravitz S.A."/>
            <person name="Mouchard L."/>
            <person name="Reinert K."/>
            <person name="Remington K.A."/>
            <person name="Clark A.G."/>
            <person name="Waterman M.S."/>
            <person name="Eichler E.E."/>
            <person name="Adams M.D."/>
            <person name="Hunkapiller M.W."/>
            <person name="Myers E.W."/>
            <person name="Venter J.C."/>
        </authorList>
    </citation>
    <scope>NUCLEOTIDE SEQUENCE [LARGE SCALE GENOMIC DNA]</scope>
</reference>
<reference key="6">
    <citation type="journal article" date="2004" name="Genome Res.">
        <title>The status, quality, and expansion of the NIH full-length cDNA project: the Mammalian Gene Collection (MGC).</title>
        <authorList>
            <consortium name="The MGC Project Team"/>
        </authorList>
    </citation>
    <scope>NUCLEOTIDE SEQUENCE [LARGE SCALE MRNA]</scope>
    <source>
        <tissue>Cervix</tissue>
        <tissue>Lymph</tissue>
        <tissue>Testis</tissue>
    </source>
</reference>
<reference key="7">
    <citation type="journal article" date="2007" name="BMC Genomics">
        <title>The full-ORF clone resource of the German cDNA consortium.</title>
        <authorList>
            <person name="Bechtel S."/>
            <person name="Rosenfelder H."/>
            <person name="Duda A."/>
            <person name="Schmidt C.P."/>
            <person name="Ernst U."/>
            <person name="Wellenreuther R."/>
            <person name="Mehrle A."/>
            <person name="Schuster C."/>
            <person name="Bahr A."/>
            <person name="Bloecker H."/>
            <person name="Heubner D."/>
            <person name="Hoerlein A."/>
            <person name="Michel G."/>
            <person name="Wedler H."/>
            <person name="Koehrer K."/>
            <person name="Ottenwaelder B."/>
            <person name="Poustka A."/>
            <person name="Wiemann S."/>
            <person name="Schupp I."/>
        </authorList>
    </citation>
    <scope>NUCLEOTIDE SEQUENCE [LARGE SCALE MRNA] OF 196-584 (ISOFORM 1)</scope>
    <source>
        <tissue>Testis</tissue>
    </source>
</reference>
<reference key="8">
    <citation type="journal article" date="1989" name="J. Cell Sci.">
        <title>Molecular cloning of the cDNA for ligatin.</title>
        <authorList>
            <person name="Jakoi E.R."/>
            <person name="Brown A.L."/>
            <person name="Ho Y.S."/>
            <person name="Snyderman R."/>
        </authorList>
    </citation>
    <scope>NUCLEOTIDE SEQUENCE [MRNA] OF 234-308</scope>
</reference>
<reference key="9">
    <citation type="journal article" date="2008" name="Proc. Natl. Acad. Sci. U.S.A.">
        <title>A quantitative atlas of mitotic phosphorylation.</title>
        <authorList>
            <person name="Dephoure N."/>
            <person name="Zhou C."/>
            <person name="Villen J."/>
            <person name="Beausoleil S.A."/>
            <person name="Bakalarski C.E."/>
            <person name="Elledge S.J."/>
            <person name="Gygi S.P."/>
        </authorList>
    </citation>
    <scope>IDENTIFICATION BY MASS SPECTROMETRY [LARGE SCALE ANALYSIS]</scope>
    <source>
        <tissue>Cervix carcinoma</tissue>
    </source>
</reference>
<reference key="10">
    <citation type="journal article" date="2009" name="Science">
        <title>Lysine acetylation targets protein complexes and co-regulates major cellular functions.</title>
        <authorList>
            <person name="Choudhary C."/>
            <person name="Kumar C."/>
            <person name="Gnad F."/>
            <person name="Nielsen M.L."/>
            <person name="Rehman M."/>
            <person name="Walther T.C."/>
            <person name="Olsen J.V."/>
            <person name="Mann M."/>
        </authorList>
    </citation>
    <scope>IDENTIFICATION BY MASS SPECTROMETRY [LARGE SCALE ANALYSIS]</scope>
</reference>
<reference key="11">
    <citation type="journal article" date="2010" name="Genes Dev.">
        <title>Activities of ligatin and MCT-1/DENR in eukaryotic translation initiation and ribosomal recycling.</title>
        <authorList>
            <person name="Skabkin M.A."/>
            <person name="Skabkina O.V."/>
            <person name="Dhote V."/>
            <person name="Komar A.A."/>
            <person name="Hellen C.U."/>
            <person name="Pestova T.V."/>
        </authorList>
    </citation>
    <scope>FUNCTION</scope>
</reference>
<reference key="12">
    <citation type="journal article" date="2010" name="Sci. Signal.">
        <title>Quantitative phosphoproteomics reveals widespread full phosphorylation site occupancy during mitosis.</title>
        <authorList>
            <person name="Olsen J.V."/>
            <person name="Vermeulen M."/>
            <person name="Santamaria A."/>
            <person name="Kumar C."/>
            <person name="Miller M.L."/>
            <person name="Jensen L.J."/>
            <person name="Gnad F."/>
            <person name="Cox J."/>
            <person name="Jensen T.S."/>
            <person name="Nigg E.A."/>
            <person name="Brunak S."/>
            <person name="Mann M."/>
        </authorList>
    </citation>
    <scope>PHOSPHORYLATION [LARGE SCALE ANALYSIS] AT SER-237</scope>
    <scope>IDENTIFICATION BY MASS SPECTROMETRY [LARGE SCALE ANALYSIS]</scope>
    <source>
        <tissue>Cervix carcinoma</tissue>
    </source>
</reference>
<reference key="13">
    <citation type="journal article" date="2011" name="BMC Syst. Biol.">
        <title>Initial characterization of the human central proteome.</title>
        <authorList>
            <person name="Burkard T.R."/>
            <person name="Planyavsky M."/>
            <person name="Kaupe I."/>
            <person name="Breitwieser F.P."/>
            <person name="Buerckstuemmer T."/>
            <person name="Bennett K.L."/>
            <person name="Superti-Furga G."/>
            <person name="Colinge J."/>
        </authorList>
    </citation>
    <scope>IDENTIFICATION BY MASS SPECTROMETRY [LARGE SCALE ANALYSIS]</scope>
</reference>
<reference key="14">
    <citation type="journal article" date="2012" name="Proc. Natl. Acad. Sci. U.S.A.">
        <title>N-terminal acetylome analyses and functional insights of the N-terminal acetyltransferase NatB.</title>
        <authorList>
            <person name="Van Damme P."/>
            <person name="Lasa M."/>
            <person name="Polevoda B."/>
            <person name="Gazquez C."/>
            <person name="Elosegui-Artola A."/>
            <person name="Kim D.S."/>
            <person name="De Juan-Pardo E."/>
            <person name="Demeyer K."/>
            <person name="Hole K."/>
            <person name="Larrea E."/>
            <person name="Timmerman E."/>
            <person name="Prieto J."/>
            <person name="Arnesen T."/>
            <person name="Sherman F."/>
            <person name="Gevaert K."/>
            <person name="Aldabe R."/>
        </authorList>
    </citation>
    <scope>ACETYLATION [LARGE SCALE ANALYSIS] AT MET-1</scope>
    <scope>IDENTIFICATION BY MASS SPECTROMETRY [LARGE SCALE ANALYSIS]</scope>
</reference>
<reference key="15">
    <citation type="journal article" date="2013" name="J. Proteome Res.">
        <title>Toward a comprehensive characterization of a human cancer cell phosphoproteome.</title>
        <authorList>
            <person name="Zhou H."/>
            <person name="Di Palma S."/>
            <person name="Preisinger C."/>
            <person name="Peng M."/>
            <person name="Polat A.N."/>
            <person name="Heck A.J."/>
            <person name="Mohammed S."/>
        </authorList>
    </citation>
    <scope>PHOSPHORYLATION [LARGE SCALE ANALYSIS] AT SER-237 AND SER-361</scope>
    <scope>IDENTIFICATION BY MASS SPECTROMETRY [LARGE SCALE ANALYSIS]</scope>
    <source>
        <tissue>Cervix carcinoma</tissue>
        <tissue>Erythroleukemia</tissue>
    </source>
</reference>